<protein>
    <recommendedName>
        <fullName>DNA-binding protein HU 2</fullName>
    </recommendedName>
</protein>
<accession>P0A3H8</accession>
<accession>O86537</accession>
<organism>
    <name type="scientific">Streptomyces lividans</name>
    <dbReference type="NCBI Taxonomy" id="1916"/>
    <lineage>
        <taxon>Bacteria</taxon>
        <taxon>Bacillati</taxon>
        <taxon>Actinomycetota</taxon>
        <taxon>Actinomycetes</taxon>
        <taxon>Kitasatosporales</taxon>
        <taxon>Streptomycetaceae</taxon>
        <taxon>Streptomyces</taxon>
    </lineage>
</organism>
<gene>
    <name type="primary">hup2</name>
</gene>
<feature type="chain" id="PRO_0000104977" description="DNA-binding protein HU 2">
    <location>
        <begin position="1"/>
        <end position="218"/>
    </location>
</feature>
<feature type="region of interest" description="Bacterial histone-like domain">
    <location>
        <begin position="1"/>
        <end position="91"/>
    </location>
</feature>
<feature type="region of interest" description="Disordered" evidence="2">
    <location>
        <begin position="101"/>
        <end position="218"/>
    </location>
</feature>
<feature type="region of interest" description="Degenerate repeats region">
    <location>
        <begin position="118"/>
        <end position="218"/>
    </location>
</feature>
<feature type="compositionally biased region" description="Low complexity" evidence="2">
    <location>
        <begin position="127"/>
        <end position="161"/>
    </location>
</feature>
<feature type="compositionally biased region" description="Basic residues" evidence="2">
    <location>
        <begin position="162"/>
        <end position="172"/>
    </location>
</feature>
<feature type="compositionally biased region" description="Low complexity" evidence="2">
    <location>
        <begin position="173"/>
        <end position="182"/>
    </location>
</feature>
<feature type="compositionally biased region" description="Basic residues" evidence="2">
    <location>
        <begin position="183"/>
        <end position="218"/>
    </location>
</feature>
<sequence length="218" mass="22348">MNKAQLVEAIADKLGGRQQAADAVDAVLDALVRAVVAGDRVSVTGFGSFEKVDRPARYARNPQTGERVRVKKTSVPRFRAGQGFKDLVSGSKKLPKNDIAVKKAPKGSLSGPPPTISKAAGKKAAAKKATGAAKKTTGAAKKTSAAAKKTTAKKTTGAAKTTAKKTTAKKSAAKTTTAAAKKTAAKKAPAKKATAKKAPAKKSTARKTTAKKATARKK</sequence>
<reference key="1">
    <citation type="submission" date="1999-09" db="EMBL/GenBank/DDBJ databases">
        <title>Second histone-like gene hup2 of Streptomyces lividans TK24.</title>
        <authorList>
            <person name="Yokoyama E."/>
            <person name="Doi K."/>
            <person name="Ogata S."/>
        </authorList>
    </citation>
    <scope>NUCLEOTIDE SEQUENCE [GENOMIC DNA]</scope>
    <source>
        <strain>TK24</strain>
    </source>
</reference>
<keyword id="KW-0226">DNA condensation</keyword>
<keyword id="KW-0238">DNA-binding</keyword>
<comment type="function">
    <text evidence="1">Histone-like DNA-binding protein which is capable of wrapping DNA to stabilize it, and thus to prevent its denaturation under extreme environmental conditions.</text>
</comment>
<comment type="subunit">
    <text evidence="1">Homodimer.</text>
</comment>
<comment type="similarity">
    <text evidence="3">Belongs to the bacterial histone-like protein family. Long actinobacterial subfamily.</text>
</comment>
<proteinExistence type="inferred from homology"/>
<dbReference type="EMBL" id="AB032557">
    <property type="protein sequence ID" value="BAA84639.1"/>
    <property type="molecule type" value="Genomic_DNA"/>
</dbReference>
<dbReference type="SMR" id="P0A3H8"/>
<dbReference type="GO" id="GO:0005829">
    <property type="term" value="C:cytosol"/>
    <property type="evidence" value="ECO:0007669"/>
    <property type="project" value="TreeGrafter"/>
</dbReference>
<dbReference type="GO" id="GO:0003677">
    <property type="term" value="F:DNA binding"/>
    <property type="evidence" value="ECO:0007669"/>
    <property type="project" value="UniProtKB-KW"/>
</dbReference>
<dbReference type="GO" id="GO:0030527">
    <property type="term" value="F:structural constituent of chromatin"/>
    <property type="evidence" value="ECO:0007669"/>
    <property type="project" value="InterPro"/>
</dbReference>
<dbReference type="GO" id="GO:0030261">
    <property type="term" value="P:chromosome condensation"/>
    <property type="evidence" value="ECO:0007669"/>
    <property type="project" value="UniProtKB-KW"/>
</dbReference>
<dbReference type="CDD" id="cd13831">
    <property type="entry name" value="HU"/>
    <property type="match status" value="1"/>
</dbReference>
<dbReference type="FunFam" id="4.10.520.10:FF:000006">
    <property type="entry name" value="DNA-binding protein HU"/>
    <property type="match status" value="1"/>
</dbReference>
<dbReference type="Gene3D" id="4.10.520.10">
    <property type="entry name" value="IHF-like DNA-binding proteins"/>
    <property type="match status" value="1"/>
</dbReference>
<dbReference type="InterPro" id="IPR000119">
    <property type="entry name" value="Hist_DNA-bd"/>
</dbReference>
<dbReference type="InterPro" id="IPR020816">
    <property type="entry name" value="Histone-like_DNA-bd_CS"/>
</dbReference>
<dbReference type="InterPro" id="IPR010992">
    <property type="entry name" value="IHF-like_DNA-bd_dom_sf"/>
</dbReference>
<dbReference type="PANTHER" id="PTHR33175">
    <property type="entry name" value="DNA-BINDING PROTEIN HU"/>
    <property type="match status" value="1"/>
</dbReference>
<dbReference type="PANTHER" id="PTHR33175:SF3">
    <property type="entry name" value="DNA-BINDING PROTEIN HU-BETA"/>
    <property type="match status" value="1"/>
</dbReference>
<dbReference type="Pfam" id="PF00216">
    <property type="entry name" value="Bac_DNA_binding"/>
    <property type="match status" value="1"/>
</dbReference>
<dbReference type="PRINTS" id="PR01727">
    <property type="entry name" value="DNABINDINGHU"/>
</dbReference>
<dbReference type="SMART" id="SM00411">
    <property type="entry name" value="BHL"/>
    <property type="match status" value="1"/>
</dbReference>
<dbReference type="SUPFAM" id="SSF47729">
    <property type="entry name" value="IHF-like DNA-binding proteins"/>
    <property type="match status" value="1"/>
</dbReference>
<dbReference type="PROSITE" id="PS00045">
    <property type="entry name" value="HISTONE_LIKE"/>
    <property type="match status" value="1"/>
</dbReference>
<name>DBH2_STRLI</name>
<evidence type="ECO:0000250" key="1"/>
<evidence type="ECO:0000256" key="2">
    <source>
        <dbReference type="SAM" id="MobiDB-lite"/>
    </source>
</evidence>
<evidence type="ECO:0000305" key="3"/>